<protein>
    <recommendedName>
        <fullName evidence="1">Glycogen synthase</fullName>
        <ecNumber evidence="1">2.4.1.21</ecNumber>
    </recommendedName>
    <alternativeName>
        <fullName evidence="1">Starch [bacterial glycogen] synthase</fullName>
    </alternativeName>
</protein>
<evidence type="ECO:0000255" key="1">
    <source>
        <dbReference type="HAMAP-Rule" id="MF_00484"/>
    </source>
</evidence>
<sequence>MKILFVASEVTPFAKSGGLADVTGALPKSLKKQGHDVRIILPFYSEVERGGYGIRKGRKSVDVMIGGSVKRGLFRHTNLEDIPVYLLENKEYFSRDHLYGTASGEYPDNHLRFAFFCRGVLDLLKKMDYRPDIIHCHDWQTAMIPLILKKEKGDDLFFSKTGTVFTIHNLAYQGLFPKEAMVDMGLDPSLFTIDCLEYYGKVNLIKGAILTADVINTVSETYCREILTPESGDGLDGVLTLRKNDLYGVLNGIDYEHWNPATDRGISKNFTPGAPAGKAANKKALQKRLGLEIAEDIPLVGMVSRLTEQKGLDLLEALLPRIAKAKLQLVLLGTGDEKYLKLLQEFAALGTDNVSVNIGFHPELAPQIYAGSDIFLMPSRYEPCGLGQMIALRYGAVPVVRKTGGLADTIFDERDQPKEPNGFSFDEYTPEALWEALSRAVEAYSDKAAWKKMMKRGMAGDFSWNTSALKYEELYRLVLAKKGR</sequence>
<keyword id="KW-0320">Glycogen biosynthesis</keyword>
<keyword id="KW-0328">Glycosyltransferase</keyword>
<keyword id="KW-1185">Reference proteome</keyword>
<keyword id="KW-0808">Transferase</keyword>
<accession>B9M2J2</accession>
<feature type="chain" id="PRO_1000135651" description="Glycogen synthase">
    <location>
        <begin position="1"/>
        <end position="484"/>
    </location>
</feature>
<feature type="binding site" evidence="1">
    <location>
        <position position="15"/>
    </location>
    <ligand>
        <name>ADP-alpha-D-glucose</name>
        <dbReference type="ChEBI" id="CHEBI:57498"/>
    </ligand>
</feature>
<organism>
    <name type="scientific">Geotalea daltonii (strain DSM 22248 / JCM 15807 / FRC-32)</name>
    <name type="common">Geobacter daltonii</name>
    <dbReference type="NCBI Taxonomy" id="316067"/>
    <lineage>
        <taxon>Bacteria</taxon>
        <taxon>Pseudomonadati</taxon>
        <taxon>Thermodesulfobacteriota</taxon>
        <taxon>Desulfuromonadia</taxon>
        <taxon>Geobacterales</taxon>
        <taxon>Geobacteraceae</taxon>
        <taxon>Geotalea</taxon>
    </lineage>
</organism>
<name>GLGA_GEODF</name>
<reference key="1">
    <citation type="submission" date="2009-01" db="EMBL/GenBank/DDBJ databases">
        <title>Complete sequence of Geobacter sp. FRC-32.</title>
        <authorList>
            <consortium name="US DOE Joint Genome Institute"/>
            <person name="Lucas S."/>
            <person name="Copeland A."/>
            <person name="Lapidus A."/>
            <person name="Glavina del Rio T."/>
            <person name="Dalin E."/>
            <person name="Tice H."/>
            <person name="Bruce D."/>
            <person name="Goodwin L."/>
            <person name="Pitluck S."/>
            <person name="Saunders E."/>
            <person name="Brettin T."/>
            <person name="Detter J.C."/>
            <person name="Han C."/>
            <person name="Larimer F."/>
            <person name="Land M."/>
            <person name="Hauser L."/>
            <person name="Kyrpides N."/>
            <person name="Ovchinnikova G."/>
            <person name="Kostka J."/>
            <person name="Richardson P."/>
        </authorList>
    </citation>
    <scope>NUCLEOTIDE SEQUENCE [LARGE SCALE GENOMIC DNA]</scope>
    <source>
        <strain>DSM 22248 / JCM 15807 / FRC-32</strain>
    </source>
</reference>
<comment type="function">
    <text evidence="1">Synthesizes alpha-1,4-glucan chains using ADP-glucose.</text>
</comment>
<comment type="catalytic activity">
    <reaction evidence="1">
        <text>[(1-&gt;4)-alpha-D-glucosyl](n) + ADP-alpha-D-glucose = [(1-&gt;4)-alpha-D-glucosyl](n+1) + ADP + H(+)</text>
        <dbReference type="Rhea" id="RHEA:18189"/>
        <dbReference type="Rhea" id="RHEA-COMP:9584"/>
        <dbReference type="Rhea" id="RHEA-COMP:9587"/>
        <dbReference type="ChEBI" id="CHEBI:15378"/>
        <dbReference type="ChEBI" id="CHEBI:15444"/>
        <dbReference type="ChEBI" id="CHEBI:57498"/>
        <dbReference type="ChEBI" id="CHEBI:456216"/>
        <dbReference type="EC" id="2.4.1.21"/>
    </reaction>
</comment>
<comment type="pathway">
    <text evidence="1">Glycan biosynthesis; glycogen biosynthesis.</text>
</comment>
<comment type="similarity">
    <text evidence="1">Belongs to the glycosyltransferase 1 family. Bacterial/plant glycogen synthase subfamily.</text>
</comment>
<dbReference type="EC" id="2.4.1.21" evidence="1"/>
<dbReference type="EMBL" id="CP001390">
    <property type="protein sequence ID" value="ACM19371.1"/>
    <property type="molecule type" value="Genomic_DNA"/>
</dbReference>
<dbReference type="RefSeq" id="WP_012646100.1">
    <property type="nucleotide sequence ID" value="NC_011979.1"/>
</dbReference>
<dbReference type="SMR" id="B9M2J2"/>
<dbReference type="STRING" id="316067.Geob_1010"/>
<dbReference type="CAZy" id="GT5">
    <property type="family name" value="Glycosyltransferase Family 5"/>
</dbReference>
<dbReference type="KEGG" id="geo:Geob_1010"/>
<dbReference type="eggNOG" id="COG0297">
    <property type="taxonomic scope" value="Bacteria"/>
</dbReference>
<dbReference type="HOGENOM" id="CLU_009583_18_2_7"/>
<dbReference type="OrthoDB" id="9808590at2"/>
<dbReference type="UniPathway" id="UPA00164"/>
<dbReference type="Proteomes" id="UP000007721">
    <property type="component" value="Chromosome"/>
</dbReference>
<dbReference type="GO" id="GO:0005829">
    <property type="term" value="C:cytosol"/>
    <property type="evidence" value="ECO:0007669"/>
    <property type="project" value="TreeGrafter"/>
</dbReference>
<dbReference type="GO" id="GO:0009011">
    <property type="term" value="F:alpha-1,4-glucan glucosyltransferase (ADP-glucose donor) activity"/>
    <property type="evidence" value="ECO:0007669"/>
    <property type="project" value="UniProtKB-UniRule"/>
</dbReference>
<dbReference type="GO" id="GO:0004373">
    <property type="term" value="F:alpha-1,4-glucan glucosyltransferase (UDP-glucose donor) activity"/>
    <property type="evidence" value="ECO:0007669"/>
    <property type="project" value="InterPro"/>
</dbReference>
<dbReference type="GO" id="GO:0005978">
    <property type="term" value="P:glycogen biosynthetic process"/>
    <property type="evidence" value="ECO:0007669"/>
    <property type="project" value="UniProtKB-UniRule"/>
</dbReference>
<dbReference type="CDD" id="cd03791">
    <property type="entry name" value="GT5_Glycogen_synthase_DULL1-like"/>
    <property type="match status" value="1"/>
</dbReference>
<dbReference type="Gene3D" id="3.40.50.2000">
    <property type="entry name" value="Glycogen Phosphorylase B"/>
    <property type="match status" value="2"/>
</dbReference>
<dbReference type="HAMAP" id="MF_00484">
    <property type="entry name" value="Glycogen_synth"/>
    <property type="match status" value="1"/>
</dbReference>
<dbReference type="InterPro" id="IPR001296">
    <property type="entry name" value="Glyco_trans_1"/>
</dbReference>
<dbReference type="InterPro" id="IPR011835">
    <property type="entry name" value="GS/SS"/>
</dbReference>
<dbReference type="InterPro" id="IPR013534">
    <property type="entry name" value="Starch_synth_cat_dom"/>
</dbReference>
<dbReference type="NCBIfam" id="TIGR02095">
    <property type="entry name" value="glgA"/>
    <property type="match status" value="1"/>
</dbReference>
<dbReference type="NCBIfam" id="NF001899">
    <property type="entry name" value="PRK00654.1-2"/>
    <property type="match status" value="1"/>
</dbReference>
<dbReference type="PANTHER" id="PTHR45825:SF11">
    <property type="entry name" value="ALPHA AMYLASE DOMAIN-CONTAINING PROTEIN"/>
    <property type="match status" value="1"/>
</dbReference>
<dbReference type="PANTHER" id="PTHR45825">
    <property type="entry name" value="GRANULE-BOUND STARCH SYNTHASE 1, CHLOROPLASTIC/AMYLOPLASTIC"/>
    <property type="match status" value="1"/>
</dbReference>
<dbReference type="Pfam" id="PF08323">
    <property type="entry name" value="Glyco_transf_5"/>
    <property type="match status" value="1"/>
</dbReference>
<dbReference type="Pfam" id="PF00534">
    <property type="entry name" value="Glycos_transf_1"/>
    <property type="match status" value="1"/>
</dbReference>
<dbReference type="SUPFAM" id="SSF53756">
    <property type="entry name" value="UDP-Glycosyltransferase/glycogen phosphorylase"/>
    <property type="match status" value="1"/>
</dbReference>
<proteinExistence type="inferred from homology"/>
<gene>
    <name evidence="1" type="primary">glgA</name>
    <name type="ordered locus">Geob_1010</name>
</gene>